<evidence type="ECO:0000250" key="1"/>
<evidence type="ECO:0000250" key="2">
    <source>
        <dbReference type="UniProtKB" id="Q26710"/>
    </source>
</evidence>
<evidence type="ECO:0000255" key="3"/>
<evidence type="ECO:0000256" key="4">
    <source>
        <dbReference type="SAM" id="MobiDB-lite"/>
    </source>
</evidence>
<evidence type="ECO:0000305" key="5"/>
<protein>
    <recommendedName>
        <fullName>Alternative oxidase, mitochondrial</fullName>
        <ecNumber>1.-.-.-</ecNumber>
    </recommendedName>
</protein>
<accession>Q8NJ59</accession>
<organism>
    <name type="scientific">Botryotinia fuckeliana</name>
    <name type="common">Noble rot fungus</name>
    <name type="synonym">Botrytis cinerea</name>
    <dbReference type="NCBI Taxonomy" id="40559"/>
    <lineage>
        <taxon>Eukaryota</taxon>
        <taxon>Fungi</taxon>
        <taxon>Dikarya</taxon>
        <taxon>Ascomycota</taxon>
        <taxon>Pezizomycotina</taxon>
        <taxon>Leotiomycetes</taxon>
        <taxon>Helotiales</taxon>
        <taxon>Sclerotiniaceae</taxon>
        <taxon>Botrytis</taxon>
    </lineage>
</organism>
<proteinExistence type="evidence at transcript level"/>
<dbReference type="EC" id="1.-.-.-"/>
<dbReference type="EMBL" id="AJ496184">
    <property type="protein sequence ID" value="CAD42731.1"/>
    <property type="molecule type" value="mRNA"/>
</dbReference>
<dbReference type="SMR" id="Q8NJ59"/>
<dbReference type="GO" id="GO:0005743">
    <property type="term" value="C:mitochondrial inner membrane"/>
    <property type="evidence" value="ECO:0007669"/>
    <property type="project" value="UniProtKB-SubCell"/>
</dbReference>
<dbReference type="GO" id="GO:0009916">
    <property type="term" value="F:alternative oxidase activity"/>
    <property type="evidence" value="ECO:0007669"/>
    <property type="project" value="InterPro"/>
</dbReference>
<dbReference type="GO" id="GO:0046872">
    <property type="term" value="F:metal ion binding"/>
    <property type="evidence" value="ECO:0007669"/>
    <property type="project" value="UniProtKB-KW"/>
</dbReference>
<dbReference type="GO" id="GO:0010230">
    <property type="term" value="P:alternative respiration"/>
    <property type="evidence" value="ECO:0007669"/>
    <property type="project" value="TreeGrafter"/>
</dbReference>
<dbReference type="CDD" id="cd01053">
    <property type="entry name" value="AOX"/>
    <property type="match status" value="1"/>
</dbReference>
<dbReference type="FunFam" id="1.20.1260.140:FF:000002">
    <property type="entry name" value="Alternative oxidase"/>
    <property type="match status" value="1"/>
</dbReference>
<dbReference type="Gene3D" id="1.20.1260.140">
    <property type="entry name" value="Alternative oxidase"/>
    <property type="match status" value="1"/>
</dbReference>
<dbReference type="InterPro" id="IPR002680">
    <property type="entry name" value="AOX"/>
</dbReference>
<dbReference type="InterPro" id="IPR038659">
    <property type="entry name" value="AOX_sf"/>
</dbReference>
<dbReference type="PANTHER" id="PTHR31803">
    <property type="entry name" value="ALTERNATIVE OXIDASE"/>
    <property type="match status" value="1"/>
</dbReference>
<dbReference type="PANTHER" id="PTHR31803:SF3">
    <property type="entry name" value="ALTERNATIVE OXIDASE"/>
    <property type="match status" value="1"/>
</dbReference>
<dbReference type="Pfam" id="PF01786">
    <property type="entry name" value="AOX"/>
    <property type="match status" value="1"/>
</dbReference>
<dbReference type="PIRSF" id="PIRSF005229">
    <property type="entry name" value="AOX"/>
    <property type="match status" value="1"/>
</dbReference>
<comment type="function">
    <text evidence="1">Catalyzes cyanide-resistant oxygen consumption. May increase respiration when the cytochrome respiratory pathway is restricted, or in response to low temperatures (By similarity).</text>
</comment>
<comment type="cofactor">
    <cofactor evidence="2">
        <name>Fe cation</name>
        <dbReference type="ChEBI" id="CHEBI:24875"/>
    </cofactor>
    <text evidence="2">Binds 2 iron ions per subunit.</text>
</comment>
<comment type="subcellular location">
    <subcellularLocation>
        <location evidence="1">Mitochondrion inner membrane</location>
        <topology evidence="1">Multi-pass membrane protein</topology>
        <orientation evidence="1">Matrix side</orientation>
    </subcellularLocation>
</comment>
<comment type="similarity">
    <text evidence="5">Belongs to the alternative oxidase family.</text>
</comment>
<keyword id="KW-0249">Electron transport</keyword>
<keyword id="KW-0408">Iron</keyword>
<keyword id="KW-0472">Membrane</keyword>
<keyword id="KW-0479">Metal-binding</keyword>
<keyword id="KW-0496">Mitochondrion</keyword>
<keyword id="KW-0999">Mitochondrion inner membrane</keyword>
<keyword id="KW-0560">Oxidoreductase</keyword>
<keyword id="KW-0679">Respiratory chain</keyword>
<keyword id="KW-0809">Transit peptide</keyword>
<keyword id="KW-0812">Transmembrane</keyword>
<keyword id="KW-1133">Transmembrane helix</keyword>
<keyword id="KW-0813">Transport</keyword>
<sequence length="361" mass="41484">MTTMYVSRVSTRPLSAQSAAQLSKAVAFFAQSYRLSSNACTAPTPSRRAFTSASKIQVKGRDLFPEPEHGQIKRTEPAWPHPPYTAEQMRSKVYFAHRKPRDFSDRVALGMVRFLRWCTDFATGYKHNVEAPKKASDSNALTATKPYQMSERKWLIRYVFLESVAGVPGMVAGMLRHLRSLRGLKRDNGWIETLLEEAYNERMHLLTFLKMYEPGIFMRTMILGAQGVFFNSFFLCYLFSPRTCHRFVGYLEEEAVLTYTLSIQDLENGHLPKWADPDFKAPDLAVEYWGMPEGNRSMRDLLYYIRADEAKHREVNHTLGNLKQDEDPNPFVSEYGKERGEKPGKGIESLKPVGWERDEVI</sequence>
<reference key="1">
    <citation type="journal article" date="2000" name="FEBS Lett.">
        <title>New sequence data enable modelling of the fungal alternative oxidase and explain an absence of regulation by pyruvate.</title>
        <authorList>
            <person name="Joseph-Horne T."/>
            <person name="Babij J."/>
            <person name="Wood P.M."/>
            <person name="Hollomon D."/>
            <person name="Sessions R.B."/>
        </authorList>
    </citation>
    <scope>NUCLEOTIDE SEQUENCE [MRNA]</scope>
</reference>
<name>AOX_BOTFU</name>
<feature type="transit peptide" description="Mitochondrion" evidence="3">
    <location>
        <begin position="1"/>
        <end status="unknown"/>
    </location>
</feature>
<feature type="chain" id="PRO_0000001716" description="Alternative oxidase, mitochondrial">
    <location>
        <begin status="unknown"/>
        <end position="361"/>
    </location>
</feature>
<feature type="transmembrane region" description="Helical" evidence="3">
    <location>
        <begin position="155"/>
        <end position="175"/>
    </location>
</feature>
<feature type="transmembrane region" description="Helical" evidence="3">
    <location>
        <begin position="221"/>
        <end position="241"/>
    </location>
</feature>
<feature type="region of interest" description="Disordered" evidence="4">
    <location>
        <begin position="320"/>
        <end position="361"/>
    </location>
</feature>
<feature type="compositionally biased region" description="Basic and acidic residues" evidence="4">
    <location>
        <begin position="335"/>
        <end position="345"/>
    </location>
</feature>
<feature type="binding site" evidence="2">
    <location>
        <position position="162"/>
    </location>
    <ligand>
        <name>Fe cation</name>
        <dbReference type="ChEBI" id="CHEBI:24875"/>
        <label>1</label>
    </ligand>
</feature>
<feature type="binding site" evidence="3">
    <location>
        <position position="162"/>
    </location>
    <ligand>
        <name>Fe cation</name>
        <dbReference type="ChEBI" id="CHEBI:24875"/>
    </ligand>
</feature>
<feature type="binding site" evidence="2">
    <location>
        <position position="201"/>
    </location>
    <ligand>
        <name>Fe cation</name>
        <dbReference type="ChEBI" id="CHEBI:24875"/>
        <label>1</label>
    </ligand>
</feature>
<feature type="binding site" evidence="2">
    <location>
        <position position="201"/>
    </location>
    <ligand>
        <name>Fe cation</name>
        <dbReference type="ChEBI" id="CHEBI:24875"/>
        <label>2</label>
    </ligand>
</feature>
<feature type="binding site" evidence="3">
    <location>
        <position position="201"/>
    </location>
    <ligand>
        <name>Fe cation</name>
        <dbReference type="ChEBI" id="CHEBI:24875"/>
    </ligand>
</feature>
<feature type="binding site" evidence="2">
    <location>
        <position position="204"/>
    </location>
    <ligand>
        <name>Fe cation</name>
        <dbReference type="ChEBI" id="CHEBI:24875"/>
        <label>1</label>
    </ligand>
</feature>
<feature type="binding site" evidence="3">
    <location>
        <position position="204"/>
    </location>
    <ligand>
        <name>Fe cation</name>
        <dbReference type="ChEBI" id="CHEBI:24875"/>
    </ligand>
</feature>
<feature type="binding site" evidence="2">
    <location>
        <position position="252"/>
    </location>
    <ligand>
        <name>Fe cation</name>
        <dbReference type="ChEBI" id="CHEBI:24875"/>
        <label>2</label>
    </ligand>
</feature>
<feature type="binding site" evidence="3">
    <location>
        <position position="253"/>
    </location>
    <ligand>
        <name>Fe cation</name>
        <dbReference type="ChEBI" id="CHEBI:24875"/>
    </ligand>
</feature>
<feature type="binding site" evidence="2">
    <location>
        <position position="309"/>
    </location>
    <ligand>
        <name>Fe cation</name>
        <dbReference type="ChEBI" id="CHEBI:24875"/>
        <label>1</label>
    </ligand>
</feature>
<feature type="binding site" evidence="2">
    <location>
        <position position="309"/>
    </location>
    <ligand>
        <name>Fe cation</name>
        <dbReference type="ChEBI" id="CHEBI:24875"/>
        <label>2</label>
    </ligand>
</feature>
<feature type="binding site" evidence="3">
    <location>
        <position position="309"/>
    </location>
    <ligand>
        <name>Fe cation</name>
        <dbReference type="ChEBI" id="CHEBI:24875"/>
    </ligand>
</feature>
<feature type="binding site" evidence="2">
    <location>
        <position position="312"/>
    </location>
    <ligand>
        <name>Fe cation</name>
        <dbReference type="ChEBI" id="CHEBI:24875"/>
        <label>2</label>
    </ligand>
</feature>
<feature type="binding site" evidence="3">
    <location>
        <position position="312"/>
    </location>
    <ligand>
        <name>Fe cation</name>
        <dbReference type="ChEBI" id="CHEBI:24875"/>
    </ligand>
</feature>
<gene>
    <name type="primary">aox</name>
</gene>